<name>Y2690_HELPS</name>
<comment type="similarity">
    <text evidence="1">Belongs to the UPF0102 family.</text>
</comment>
<reference key="1">
    <citation type="submission" date="2008-05" db="EMBL/GenBank/DDBJ databases">
        <title>Genome sequence of Helicobacter pylori from the remote Amazon: traces of Asian ancestry of the first Americans.</title>
        <authorList>
            <person name="Kersulyte D."/>
            <person name="Kalia A."/>
            <person name="Gilman R.H."/>
            <person name="Berg D.E."/>
        </authorList>
    </citation>
    <scope>NUCLEOTIDE SEQUENCE [LARGE SCALE GENOMIC DNA]</scope>
    <source>
        <strain>Shi470</strain>
    </source>
</reference>
<organism>
    <name type="scientific">Helicobacter pylori (strain Shi470)</name>
    <dbReference type="NCBI Taxonomy" id="512562"/>
    <lineage>
        <taxon>Bacteria</taxon>
        <taxon>Pseudomonadati</taxon>
        <taxon>Campylobacterota</taxon>
        <taxon>Epsilonproteobacteria</taxon>
        <taxon>Campylobacterales</taxon>
        <taxon>Helicobacteraceae</taxon>
        <taxon>Helicobacter</taxon>
    </lineage>
</organism>
<sequence length="114" mass="13231">MRFLNNKHRAKGLKAEEEACEFLKTLGFEMVERNFFSKFGEIDIIALKKGVLHFIEVKSGENFDPIYAITPSKLKKMIKTIRCYFSQKDPNSDFCIDALIVKNGKFELLENITF</sequence>
<protein>
    <recommendedName>
        <fullName evidence="1">UPF0102 protein HPSH_02690</fullName>
    </recommendedName>
</protein>
<evidence type="ECO:0000255" key="1">
    <source>
        <dbReference type="HAMAP-Rule" id="MF_00048"/>
    </source>
</evidence>
<accession>B2UT06</accession>
<feature type="chain" id="PRO_1000091246" description="UPF0102 protein HPSH_02690">
    <location>
        <begin position="1"/>
        <end position="114"/>
    </location>
</feature>
<gene>
    <name type="ordered locus">HPSH_02690</name>
</gene>
<proteinExistence type="inferred from homology"/>
<dbReference type="EMBL" id="CP001072">
    <property type="protein sequence ID" value="ACD47988.1"/>
    <property type="molecule type" value="Genomic_DNA"/>
</dbReference>
<dbReference type="RefSeq" id="WP_001211672.1">
    <property type="nucleotide sequence ID" value="NC_010698.2"/>
</dbReference>
<dbReference type="SMR" id="B2UT06"/>
<dbReference type="KEGG" id="hps:HPSH_02690"/>
<dbReference type="HOGENOM" id="CLU_115353_3_2_7"/>
<dbReference type="GO" id="GO:0003676">
    <property type="term" value="F:nucleic acid binding"/>
    <property type="evidence" value="ECO:0007669"/>
    <property type="project" value="InterPro"/>
</dbReference>
<dbReference type="Gene3D" id="3.40.1350.10">
    <property type="match status" value="1"/>
</dbReference>
<dbReference type="HAMAP" id="MF_00048">
    <property type="entry name" value="UPF0102"/>
    <property type="match status" value="1"/>
</dbReference>
<dbReference type="InterPro" id="IPR011335">
    <property type="entry name" value="Restrct_endonuc-II-like"/>
</dbReference>
<dbReference type="InterPro" id="IPR011856">
    <property type="entry name" value="tRNA_endonuc-like_dom_sf"/>
</dbReference>
<dbReference type="InterPro" id="IPR003509">
    <property type="entry name" value="UPF0102_YraN-like"/>
</dbReference>
<dbReference type="NCBIfam" id="NF009152">
    <property type="entry name" value="PRK12497.2-4"/>
    <property type="match status" value="1"/>
</dbReference>
<dbReference type="PANTHER" id="PTHR34039">
    <property type="entry name" value="UPF0102 PROTEIN YRAN"/>
    <property type="match status" value="1"/>
</dbReference>
<dbReference type="PANTHER" id="PTHR34039:SF1">
    <property type="entry name" value="UPF0102 PROTEIN YRAN"/>
    <property type="match status" value="1"/>
</dbReference>
<dbReference type="Pfam" id="PF02021">
    <property type="entry name" value="UPF0102"/>
    <property type="match status" value="1"/>
</dbReference>
<dbReference type="SUPFAM" id="SSF52980">
    <property type="entry name" value="Restriction endonuclease-like"/>
    <property type="match status" value="1"/>
</dbReference>